<sequence length="617" mass="65610">MYPLRSKVTTVGRQASGARALWRATGSKESDFGKPIVAIANSFTQFVPGHVHLKNVGDIVADAVREAGGVPKEFNTIAVDDGIAMGHSGMLYSLPSREIISDSIEYMVNAHTADALVCISNCDKITPGMLNAALRLNIPTIFVSGGPMEAGKAVVVDGVAHAPTDLITAITASASDAVSDEGLTRVEESACPTCGSCSGMFTANSMNCLTEALGLALPGNGTTLATHSARRDLFEQAGRTIVDLCRRYYGEEDDAVLPRSIATKEAFSNAMALDMAMGGSTNTILHTLAAAQEGEVDFTLEDINEISYRVPCLSKVAPNGTYHIEDVHRAGGIPAILGELRRAGHLNLKVHTALYDNAEEWLDDWDIRGGKATEAALELFHAAPGGVRTTEPFSQSNRWDELDTDAANGCIHDAERAFSSDGGLVVLRGNLAPNGAIVKAAGVEEELWTFTGPARVVESQEEAVSIILKKEVQPGDVIVIRYEGPAGGPGMQEMLHPTSFLKGSGLGKACALITDGRFSGGTSGLSIGHISPEAAHGGLIGLVENGDPITINIRERQLTLDVDEEVLERRRATEEQREKPWTPKERNRPVTKALRAYANMATSADRGAVRVVDGYVN</sequence>
<proteinExistence type="inferred from homology"/>
<accession>C3PFW7</accession>
<dbReference type="EC" id="4.2.1.9" evidence="1"/>
<dbReference type="EMBL" id="CP001601">
    <property type="protein sequence ID" value="ACP32721.1"/>
    <property type="molecule type" value="Genomic_DNA"/>
</dbReference>
<dbReference type="RefSeq" id="WP_010186914.1">
    <property type="nucleotide sequence ID" value="NC_012590.1"/>
</dbReference>
<dbReference type="SMR" id="C3PFW7"/>
<dbReference type="STRING" id="548476.cauri_1128"/>
<dbReference type="GeneID" id="31923748"/>
<dbReference type="KEGG" id="car:cauri_1128"/>
<dbReference type="eggNOG" id="COG0129">
    <property type="taxonomic scope" value="Bacteria"/>
</dbReference>
<dbReference type="HOGENOM" id="CLU_014271_4_3_11"/>
<dbReference type="OrthoDB" id="9807077at2"/>
<dbReference type="UniPathway" id="UPA00047">
    <property type="reaction ID" value="UER00057"/>
</dbReference>
<dbReference type="UniPathway" id="UPA00049">
    <property type="reaction ID" value="UER00061"/>
</dbReference>
<dbReference type="Proteomes" id="UP000002077">
    <property type="component" value="Chromosome"/>
</dbReference>
<dbReference type="GO" id="GO:0005829">
    <property type="term" value="C:cytosol"/>
    <property type="evidence" value="ECO:0007669"/>
    <property type="project" value="TreeGrafter"/>
</dbReference>
<dbReference type="GO" id="GO:0051537">
    <property type="term" value="F:2 iron, 2 sulfur cluster binding"/>
    <property type="evidence" value="ECO:0007669"/>
    <property type="project" value="UniProtKB-UniRule"/>
</dbReference>
<dbReference type="GO" id="GO:0004160">
    <property type="term" value="F:dihydroxy-acid dehydratase activity"/>
    <property type="evidence" value="ECO:0007669"/>
    <property type="project" value="UniProtKB-UniRule"/>
</dbReference>
<dbReference type="GO" id="GO:0000287">
    <property type="term" value="F:magnesium ion binding"/>
    <property type="evidence" value="ECO:0007669"/>
    <property type="project" value="UniProtKB-UniRule"/>
</dbReference>
<dbReference type="GO" id="GO:0009097">
    <property type="term" value="P:isoleucine biosynthetic process"/>
    <property type="evidence" value="ECO:0007669"/>
    <property type="project" value="UniProtKB-UniRule"/>
</dbReference>
<dbReference type="GO" id="GO:0009099">
    <property type="term" value="P:L-valine biosynthetic process"/>
    <property type="evidence" value="ECO:0007669"/>
    <property type="project" value="UniProtKB-UniRule"/>
</dbReference>
<dbReference type="FunFam" id="3.50.30.80:FF:000001">
    <property type="entry name" value="Dihydroxy-acid dehydratase"/>
    <property type="match status" value="1"/>
</dbReference>
<dbReference type="Gene3D" id="3.50.30.80">
    <property type="entry name" value="IlvD/EDD C-terminal domain-like"/>
    <property type="match status" value="1"/>
</dbReference>
<dbReference type="HAMAP" id="MF_00012">
    <property type="entry name" value="IlvD"/>
    <property type="match status" value="1"/>
</dbReference>
<dbReference type="InterPro" id="IPR042096">
    <property type="entry name" value="Dihydro-acid_dehy_C"/>
</dbReference>
<dbReference type="InterPro" id="IPR004404">
    <property type="entry name" value="DihydroxyA_deHydtase"/>
</dbReference>
<dbReference type="InterPro" id="IPR020558">
    <property type="entry name" value="DiOHA_6PGluconate_deHydtase_CS"/>
</dbReference>
<dbReference type="InterPro" id="IPR056740">
    <property type="entry name" value="ILV_EDD_C"/>
</dbReference>
<dbReference type="InterPro" id="IPR000581">
    <property type="entry name" value="ILV_EDD_N"/>
</dbReference>
<dbReference type="InterPro" id="IPR037237">
    <property type="entry name" value="IlvD/EDD_N"/>
</dbReference>
<dbReference type="NCBIfam" id="TIGR00110">
    <property type="entry name" value="ilvD"/>
    <property type="match status" value="1"/>
</dbReference>
<dbReference type="NCBIfam" id="NF009103">
    <property type="entry name" value="PRK12448.1"/>
    <property type="match status" value="1"/>
</dbReference>
<dbReference type="PANTHER" id="PTHR43661">
    <property type="entry name" value="D-XYLONATE DEHYDRATASE"/>
    <property type="match status" value="1"/>
</dbReference>
<dbReference type="PANTHER" id="PTHR43661:SF3">
    <property type="entry name" value="D-XYLONATE DEHYDRATASE YAGF-RELATED"/>
    <property type="match status" value="1"/>
</dbReference>
<dbReference type="Pfam" id="PF24877">
    <property type="entry name" value="ILV_EDD_C"/>
    <property type="match status" value="1"/>
</dbReference>
<dbReference type="Pfam" id="PF00920">
    <property type="entry name" value="ILVD_EDD_N"/>
    <property type="match status" value="1"/>
</dbReference>
<dbReference type="SUPFAM" id="SSF143975">
    <property type="entry name" value="IlvD/EDD N-terminal domain-like"/>
    <property type="match status" value="1"/>
</dbReference>
<dbReference type="SUPFAM" id="SSF52016">
    <property type="entry name" value="LeuD/IlvD-like"/>
    <property type="match status" value="1"/>
</dbReference>
<dbReference type="PROSITE" id="PS00886">
    <property type="entry name" value="ILVD_EDD_1"/>
    <property type="match status" value="1"/>
</dbReference>
<dbReference type="PROSITE" id="PS00887">
    <property type="entry name" value="ILVD_EDD_2"/>
    <property type="match status" value="1"/>
</dbReference>
<comment type="function">
    <text evidence="1">Functions in the biosynthesis of branched-chain amino acids. Catalyzes the dehydration of (2R,3R)-2,3-dihydroxy-3-methylpentanoate (2,3-dihydroxy-3-methylvalerate) into 2-oxo-3-methylpentanoate (2-oxo-3-methylvalerate) and of (2R)-2,3-dihydroxy-3-methylbutanoate (2,3-dihydroxyisovalerate) into 2-oxo-3-methylbutanoate (2-oxoisovalerate), the penultimate precursor to L-isoleucine and L-valine, respectively.</text>
</comment>
<comment type="catalytic activity">
    <reaction evidence="1">
        <text>(2R)-2,3-dihydroxy-3-methylbutanoate = 3-methyl-2-oxobutanoate + H2O</text>
        <dbReference type="Rhea" id="RHEA:24809"/>
        <dbReference type="ChEBI" id="CHEBI:11851"/>
        <dbReference type="ChEBI" id="CHEBI:15377"/>
        <dbReference type="ChEBI" id="CHEBI:49072"/>
        <dbReference type="EC" id="4.2.1.9"/>
    </reaction>
    <physiologicalReaction direction="left-to-right" evidence="1">
        <dbReference type="Rhea" id="RHEA:24810"/>
    </physiologicalReaction>
</comment>
<comment type="catalytic activity">
    <reaction evidence="1">
        <text>(2R,3R)-2,3-dihydroxy-3-methylpentanoate = (S)-3-methyl-2-oxopentanoate + H2O</text>
        <dbReference type="Rhea" id="RHEA:27694"/>
        <dbReference type="ChEBI" id="CHEBI:15377"/>
        <dbReference type="ChEBI" id="CHEBI:35146"/>
        <dbReference type="ChEBI" id="CHEBI:49258"/>
        <dbReference type="EC" id="4.2.1.9"/>
    </reaction>
    <physiologicalReaction direction="left-to-right" evidence="1">
        <dbReference type="Rhea" id="RHEA:27695"/>
    </physiologicalReaction>
</comment>
<comment type="cofactor">
    <cofactor evidence="1">
        <name>[2Fe-2S] cluster</name>
        <dbReference type="ChEBI" id="CHEBI:190135"/>
    </cofactor>
    <text evidence="1">Binds 1 [2Fe-2S] cluster per subunit. This cluster acts as a Lewis acid cofactor.</text>
</comment>
<comment type="cofactor">
    <cofactor evidence="1">
        <name>Mg(2+)</name>
        <dbReference type="ChEBI" id="CHEBI:18420"/>
    </cofactor>
</comment>
<comment type="pathway">
    <text evidence="1">Amino-acid biosynthesis; L-isoleucine biosynthesis; L-isoleucine from 2-oxobutanoate: step 3/4.</text>
</comment>
<comment type="pathway">
    <text evidence="1">Amino-acid biosynthesis; L-valine biosynthesis; L-valine from pyruvate: step 3/4.</text>
</comment>
<comment type="subunit">
    <text evidence="1">Homodimer.</text>
</comment>
<comment type="similarity">
    <text evidence="1">Belongs to the IlvD/Edd family.</text>
</comment>
<reference key="1">
    <citation type="journal article" date="2010" name="BMC Genomics">
        <title>Complete genome sequence and lifestyle of black-pigmented Corynebacterium aurimucosum ATCC 700975 (formerly C. nigricans CN-1) isolated from a vaginal swab of a woman with spontaneous abortion.</title>
        <authorList>
            <person name="Trost E."/>
            <person name="Gotker S."/>
            <person name="Schneider J."/>
            <person name="Schneiker-Bekel S."/>
            <person name="Szczepanowski R."/>
            <person name="Tilker A."/>
            <person name="Viehoever P."/>
            <person name="Arnold W."/>
            <person name="Bekel T."/>
            <person name="Blom J."/>
            <person name="Gartemann K.H."/>
            <person name="Linke B."/>
            <person name="Goesmann A."/>
            <person name="Puhler A."/>
            <person name="Shukla S.K."/>
            <person name="Tauch A."/>
        </authorList>
    </citation>
    <scope>NUCLEOTIDE SEQUENCE [LARGE SCALE GENOMIC DNA]</scope>
    <source>
        <strain>ATCC 700975 / DSM 44827 / CIP 107346 / CN-1</strain>
    </source>
</reference>
<keyword id="KW-0001">2Fe-2S</keyword>
<keyword id="KW-0028">Amino-acid biosynthesis</keyword>
<keyword id="KW-0100">Branched-chain amino acid biosynthesis</keyword>
<keyword id="KW-0408">Iron</keyword>
<keyword id="KW-0411">Iron-sulfur</keyword>
<keyword id="KW-0456">Lyase</keyword>
<keyword id="KW-0460">Magnesium</keyword>
<keyword id="KW-0479">Metal-binding</keyword>
<keyword id="KW-1185">Reference proteome</keyword>
<name>ILVD_CORA7</name>
<evidence type="ECO:0000255" key="1">
    <source>
        <dbReference type="HAMAP-Rule" id="MF_00012"/>
    </source>
</evidence>
<gene>
    <name evidence="1" type="primary">ilvD</name>
    <name type="ordered locus">cauri_1128</name>
</gene>
<organism>
    <name type="scientific">Corynebacterium aurimucosum (strain ATCC 700975 / DSM 44827 / CIP 107346 / CN-1)</name>
    <name type="common">Corynebacterium nigricans</name>
    <dbReference type="NCBI Taxonomy" id="548476"/>
    <lineage>
        <taxon>Bacteria</taxon>
        <taxon>Bacillati</taxon>
        <taxon>Actinomycetota</taxon>
        <taxon>Actinomycetes</taxon>
        <taxon>Mycobacteriales</taxon>
        <taxon>Corynebacteriaceae</taxon>
        <taxon>Corynebacterium</taxon>
    </lineage>
</organism>
<protein>
    <recommendedName>
        <fullName evidence="1">Dihydroxy-acid dehydratase</fullName>
        <shortName evidence="1">DAD</shortName>
        <ecNumber evidence="1">4.2.1.9</ecNumber>
    </recommendedName>
</protein>
<feature type="chain" id="PRO_1000190661" description="Dihydroxy-acid dehydratase">
    <location>
        <begin position="1"/>
        <end position="617"/>
    </location>
</feature>
<feature type="active site" description="Proton acceptor" evidence="1">
    <location>
        <position position="519"/>
    </location>
</feature>
<feature type="binding site" evidence="1">
    <location>
        <position position="81"/>
    </location>
    <ligand>
        <name>Mg(2+)</name>
        <dbReference type="ChEBI" id="CHEBI:18420"/>
    </ligand>
</feature>
<feature type="binding site" evidence="1">
    <location>
        <position position="122"/>
    </location>
    <ligand>
        <name>[2Fe-2S] cluster</name>
        <dbReference type="ChEBI" id="CHEBI:190135"/>
    </ligand>
</feature>
<feature type="binding site" evidence="1">
    <location>
        <position position="123"/>
    </location>
    <ligand>
        <name>Mg(2+)</name>
        <dbReference type="ChEBI" id="CHEBI:18420"/>
    </ligand>
</feature>
<feature type="binding site" description="via carbamate group" evidence="1">
    <location>
        <position position="124"/>
    </location>
    <ligand>
        <name>Mg(2+)</name>
        <dbReference type="ChEBI" id="CHEBI:18420"/>
    </ligand>
</feature>
<feature type="binding site" evidence="1">
    <location>
        <position position="197"/>
    </location>
    <ligand>
        <name>[2Fe-2S] cluster</name>
        <dbReference type="ChEBI" id="CHEBI:190135"/>
    </ligand>
</feature>
<feature type="binding site" evidence="1">
    <location>
        <position position="493"/>
    </location>
    <ligand>
        <name>Mg(2+)</name>
        <dbReference type="ChEBI" id="CHEBI:18420"/>
    </ligand>
</feature>
<feature type="modified residue" description="N6-carboxylysine" evidence="1">
    <location>
        <position position="124"/>
    </location>
</feature>